<keyword id="KW-0028">Amino-acid biosynthesis</keyword>
<keyword id="KW-0100">Branched-chain amino acid biosynthesis</keyword>
<keyword id="KW-0963">Cytoplasm</keyword>
<keyword id="KW-0432">Leucine biosynthesis</keyword>
<keyword id="KW-0460">Magnesium</keyword>
<keyword id="KW-0464">Manganese</keyword>
<keyword id="KW-0479">Metal-binding</keyword>
<keyword id="KW-0520">NAD</keyword>
<keyword id="KW-0560">Oxidoreductase</keyword>
<keyword id="KW-1185">Reference proteome</keyword>
<reference key="1">
    <citation type="journal article" date="1987" name="Nucleic Acids Res.">
        <title>The nucleotide sequence of 3-isopropylmalate dehydrogenase gene from Bacillus subtilis.</title>
        <authorList>
            <person name="Imai R."/>
            <person name="Sekiguchi T."/>
            <person name="Nosoh Y."/>
            <person name="Tsuda K."/>
        </authorList>
    </citation>
    <scope>NUCLEOTIDE SEQUENCE [GENOMIC DNA]</scope>
    <source>
        <strain>168</strain>
    </source>
</reference>
<reference key="2">
    <citation type="journal article" date="1996" name="Microbiology">
        <title>The dnaB-pheA (256 degrees-240 degrees) region of the Bacillus subtilis chromosome containing genes responsible for stress responses, the utilization of plant cell walls and primary metabolism.</title>
        <authorList>
            <person name="Wipat A."/>
            <person name="Carter N."/>
            <person name="Brignell C.S."/>
            <person name="Guy J.B."/>
            <person name="Piper K."/>
            <person name="Sanders J."/>
            <person name="Emmerson P.T."/>
            <person name="Harwood C.R."/>
        </authorList>
    </citation>
    <scope>NUCLEOTIDE SEQUENCE [GENOMIC DNA]</scope>
    <source>
        <strain>168</strain>
    </source>
</reference>
<reference key="3">
    <citation type="journal article" date="1997" name="Nature">
        <title>The complete genome sequence of the Gram-positive bacterium Bacillus subtilis.</title>
        <authorList>
            <person name="Kunst F."/>
            <person name="Ogasawara N."/>
            <person name="Moszer I."/>
            <person name="Albertini A.M."/>
            <person name="Alloni G."/>
            <person name="Azevedo V."/>
            <person name="Bertero M.G."/>
            <person name="Bessieres P."/>
            <person name="Bolotin A."/>
            <person name="Borchert S."/>
            <person name="Borriss R."/>
            <person name="Boursier L."/>
            <person name="Brans A."/>
            <person name="Braun M."/>
            <person name="Brignell S.C."/>
            <person name="Bron S."/>
            <person name="Brouillet S."/>
            <person name="Bruschi C.V."/>
            <person name="Caldwell B."/>
            <person name="Capuano V."/>
            <person name="Carter N.M."/>
            <person name="Choi S.-K."/>
            <person name="Codani J.-J."/>
            <person name="Connerton I.F."/>
            <person name="Cummings N.J."/>
            <person name="Daniel R.A."/>
            <person name="Denizot F."/>
            <person name="Devine K.M."/>
            <person name="Duesterhoeft A."/>
            <person name="Ehrlich S.D."/>
            <person name="Emmerson P.T."/>
            <person name="Entian K.-D."/>
            <person name="Errington J."/>
            <person name="Fabret C."/>
            <person name="Ferrari E."/>
            <person name="Foulger D."/>
            <person name="Fritz C."/>
            <person name="Fujita M."/>
            <person name="Fujita Y."/>
            <person name="Fuma S."/>
            <person name="Galizzi A."/>
            <person name="Galleron N."/>
            <person name="Ghim S.-Y."/>
            <person name="Glaser P."/>
            <person name="Goffeau A."/>
            <person name="Golightly E.J."/>
            <person name="Grandi G."/>
            <person name="Guiseppi G."/>
            <person name="Guy B.J."/>
            <person name="Haga K."/>
            <person name="Haiech J."/>
            <person name="Harwood C.R."/>
            <person name="Henaut A."/>
            <person name="Hilbert H."/>
            <person name="Holsappel S."/>
            <person name="Hosono S."/>
            <person name="Hullo M.-F."/>
            <person name="Itaya M."/>
            <person name="Jones L.-M."/>
            <person name="Joris B."/>
            <person name="Karamata D."/>
            <person name="Kasahara Y."/>
            <person name="Klaerr-Blanchard M."/>
            <person name="Klein C."/>
            <person name="Kobayashi Y."/>
            <person name="Koetter P."/>
            <person name="Koningstein G."/>
            <person name="Krogh S."/>
            <person name="Kumano M."/>
            <person name="Kurita K."/>
            <person name="Lapidus A."/>
            <person name="Lardinois S."/>
            <person name="Lauber J."/>
            <person name="Lazarevic V."/>
            <person name="Lee S.-M."/>
            <person name="Levine A."/>
            <person name="Liu H."/>
            <person name="Masuda S."/>
            <person name="Mauel C."/>
            <person name="Medigue C."/>
            <person name="Medina N."/>
            <person name="Mellado R.P."/>
            <person name="Mizuno M."/>
            <person name="Moestl D."/>
            <person name="Nakai S."/>
            <person name="Noback M."/>
            <person name="Noone D."/>
            <person name="O'Reilly M."/>
            <person name="Ogawa K."/>
            <person name="Ogiwara A."/>
            <person name="Oudega B."/>
            <person name="Park S.-H."/>
            <person name="Parro V."/>
            <person name="Pohl T.M."/>
            <person name="Portetelle D."/>
            <person name="Porwollik S."/>
            <person name="Prescott A.M."/>
            <person name="Presecan E."/>
            <person name="Pujic P."/>
            <person name="Purnelle B."/>
            <person name="Rapoport G."/>
            <person name="Rey M."/>
            <person name="Reynolds S."/>
            <person name="Rieger M."/>
            <person name="Rivolta C."/>
            <person name="Rocha E."/>
            <person name="Roche B."/>
            <person name="Rose M."/>
            <person name="Sadaie Y."/>
            <person name="Sato T."/>
            <person name="Scanlan E."/>
            <person name="Schleich S."/>
            <person name="Schroeter R."/>
            <person name="Scoffone F."/>
            <person name="Sekiguchi J."/>
            <person name="Sekowska A."/>
            <person name="Seror S.J."/>
            <person name="Serror P."/>
            <person name="Shin B.-S."/>
            <person name="Soldo B."/>
            <person name="Sorokin A."/>
            <person name="Tacconi E."/>
            <person name="Takagi T."/>
            <person name="Takahashi H."/>
            <person name="Takemaru K."/>
            <person name="Takeuchi M."/>
            <person name="Tamakoshi A."/>
            <person name="Tanaka T."/>
            <person name="Terpstra P."/>
            <person name="Tognoni A."/>
            <person name="Tosato V."/>
            <person name="Uchiyama S."/>
            <person name="Vandenbol M."/>
            <person name="Vannier F."/>
            <person name="Vassarotti A."/>
            <person name="Viari A."/>
            <person name="Wambutt R."/>
            <person name="Wedler E."/>
            <person name="Wedler H."/>
            <person name="Weitzenegger T."/>
            <person name="Winters P."/>
            <person name="Wipat A."/>
            <person name="Yamamoto H."/>
            <person name="Yamane K."/>
            <person name="Yasumoto K."/>
            <person name="Yata K."/>
            <person name="Yoshida K."/>
            <person name="Yoshikawa H.-F."/>
            <person name="Zumstein E."/>
            <person name="Yoshikawa H."/>
            <person name="Danchin A."/>
        </authorList>
    </citation>
    <scope>NUCLEOTIDE SEQUENCE [LARGE SCALE GENOMIC DNA]</scope>
    <source>
        <strain>168</strain>
    </source>
</reference>
<reference key="4">
    <citation type="journal article" date="2009" name="Microbiology">
        <title>From a consortium sequence to a unified sequence: the Bacillus subtilis 168 reference genome a decade later.</title>
        <authorList>
            <person name="Barbe V."/>
            <person name="Cruveiller S."/>
            <person name="Kunst F."/>
            <person name="Lenoble P."/>
            <person name="Meurice G."/>
            <person name="Sekowska A."/>
            <person name="Vallenet D."/>
            <person name="Wang T."/>
            <person name="Moszer I."/>
            <person name="Medigue C."/>
            <person name="Danchin A."/>
        </authorList>
    </citation>
    <scope>SEQUENCE REVISION TO 83 AND 117</scope>
</reference>
<accession>P05645</accession>
<accession>P94566</accession>
<comment type="function">
    <text>Catalyzes the oxidation of 3-carboxy-2-hydroxy-4-methylpentanoate (3-isopropylmalate) to 3-carboxy-4-methyl-2-oxopentanoate. The product decarboxylates to 4-methyl-2 oxopentanoate.</text>
</comment>
<comment type="catalytic activity">
    <reaction>
        <text>(2R,3S)-3-isopropylmalate + NAD(+) = 4-methyl-2-oxopentanoate + CO2 + NADH</text>
        <dbReference type="Rhea" id="RHEA:32271"/>
        <dbReference type="ChEBI" id="CHEBI:16526"/>
        <dbReference type="ChEBI" id="CHEBI:17865"/>
        <dbReference type="ChEBI" id="CHEBI:35121"/>
        <dbReference type="ChEBI" id="CHEBI:57540"/>
        <dbReference type="ChEBI" id="CHEBI:57945"/>
        <dbReference type="EC" id="1.1.1.85"/>
    </reaction>
</comment>
<comment type="cofactor">
    <cofactor evidence="1">
        <name>Mg(2+)</name>
        <dbReference type="ChEBI" id="CHEBI:18420"/>
    </cofactor>
    <cofactor evidence="1">
        <name>Mn(2+)</name>
        <dbReference type="ChEBI" id="CHEBI:29035"/>
    </cofactor>
    <text evidence="1">Binds 1 Mg(2+) or Mn(2+) ion per subunit.</text>
</comment>
<comment type="pathway">
    <text>Amino-acid biosynthesis; L-leucine biosynthesis; L-leucine from 3-methyl-2-oxobutanoate: step 3/4.</text>
</comment>
<comment type="subunit">
    <text>Homodimer.</text>
</comment>
<comment type="subcellular location">
    <subcellularLocation>
        <location>Cytoplasm</location>
    </subcellularLocation>
</comment>
<comment type="similarity">
    <text evidence="2">Belongs to the isocitrate and isopropylmalate dehydrogenases family. LeuB type 1 subfamily.</text>
</comment>
<organism>
    <name type="scientific">Bacillus subtilis (strain 168)</name>
    <dbReference type="NCBI Taxonomy" id="224308"/>
    <lineage>
        <taxon>Bacteria</taxon>
        <taxon>Bacillati</taxon>
        <taxon>Bacillota</taxon>
        <taxon>Bacilli</taxon>
        <taxon>Bacillales</taxon>
        <taxon>Bacillaceae</taxon>
        <taxon>Bacillus</taxon>
    </lineage>
</organism>
<evidence type="ECO:0000250" key="1"/>
<evidence type="ECO:0000305" key="2"/>
<feature type="chain" id="PRO_0000083642" description="3-isopropylmalate dehydrogenase">
    <location>
        <begin position="1"/>
        <end position="365"/>
    </location>
</feature>
<feature type="binding site" evidence="1">
    <location>
        <begin position="76"/>
        <end position="89"/>
    </location>
    <ligand>
        <name>NAD(+)</name>
        <dbReference type="ChEBI" id="CHEBI:57540"/>
    </ligand>
</feature>
<feature type="binding site" evidence="1">
    <location>
        <position position="96"/>
    </location>
    <ligand>
        <name>substrate</name>
    </ligand>
</feature>
<feature type="binding site" evidence="1">
    <location>
        <position position="106"/>
    </location>
    <ligand>
        <name>substrate</name>
    </ligand>
</feature>
<feature type="binding site" evidence="1">
    <location>
        <position position="134"/>
    </location>
    <ligand>
        <name>substrate</name>
    </ligand>
</feature>
<feature type="binding site" evidence="1">
    <location>
        <position position="224"/>
    </location>
    <ligand>
        <name>Mg(2+)</name>
        <dbReference type="ChEBI" id="CHEBI:18420"/>
    </ligand>
</feature>
<feature type="binding site" evidence="1">
    <location>
        <position position="224"/>
    </location>
    <ligand>
        <name>substrate</name>
    </ligand>
</feature>
<feature type="binding site" evidence="1">
    <location>
        <position position="248"/>
    </location>
    <ligand>
        <name>Mg(2+)</name>
        <dbReference type="ChEBI" id="CHEBI:18420"/>
    </ligand>
</feature>
<feature type="binding site" evidence="1">
    <location>
        <position position="252"/>
    </location>
    <ligand>
        <name>Mg(2+)</name>
        <dbReference type="ChEBI" id="CHEBI:18420"/>
    </ligand>
</feature>
<feature type="binding site" evidence="1">
    <location>
        <begin position="282"/>
        <end position="294"/>
    </location>
    <ligand>
        <name>NAD(+)</name>
        <dbReference type="ChEBI" id="CHEBI:57540"/>
    </ligand>
</feature>
<feature type="site" description="Important for catalysis" evidence="1">
    <location>
        <position position="141"/>
    </location>
</feature>
<feature type="site" description="Important for catalysis" evidence="1">
    <location>
        <position position="192"/>
    </location>
</feature>
<feature type="sequence conflict" description="In Ref. 1; CAA68432 and 2; CAA99532." evidence="2" ref="1 2">
    <original>P</original>
    <variation>L</variation>
    <location>
        <position position="83"/>
    </location>
</feature>
<feature type="sequence conflict" description="In Ref. 1; CAA68432 and 2; CAA99532." evidence="2" ref="1 2">
    <original>A</original>
    <variation>R</variation>
    <location>
        <position position="117"/>
    </location>
</feature>
<feature type="sequence conflict" description="In Ref. 1; CAA68432." evidence="2" ref="1">
    <original>A</original>
    <variation>T</variation>
    <location>
        <position position="182"/>
    </location>
</feature>
<gene>
    <name type="primary">leuB</name>
    <name type="synonym">leuC</name>
    <name type="ordered locus">BSU28270</name>
</gene>
<sequence>MKKRIALLPGDGIGPEVLESATDVLKSVAERFNHEFEFEYGLIGGAAIDEHHNPLPEETVAACKNADAILLGAVGGPKWDQNPSELRPEKGLLSIRKQLDLFANLRPVKVFESLSDASPLKKEYIDNVDFVIVRELTGGLYFGQPSKRYVNTEGEQEAVDTLFYKRTEIERVIREGFKMAAARKGKVTSVDKANVLESSRLWREVAEDVAQEFPDVKLEHMLVDNAAMQLIYAPNQFDVVVTENMFGDILSDEASMLTGSLGMLPSASLSSSGLHLFEPVHGSAPDIAGKGMANPFAAILSAAMLLRTSFGLEEEAKAVEDAVNKVLASGKRTRDLARSEEFSSTQAITEEVKAAIMSENTISNV</sequence>
<name>LEU3_BACSU</name>
<protein>
    <recommendedName>
        <fullName>3-isopropylmalate dehydrogenase</fullName>
        <ecNumber>1.1.1.85</ecNumber>
    </recommendedName>
    <alternativeName>
        <fullName>3-IPM-DH</fullName>
    </alternativeName>
    <alternativeName>
        <fullName>Beta-IPM dehydrogenase</fullName>
        <shortName>IMDH</shortName>
    </alternativeName>
</protein>
<dbReference type="EC" id="1.1.1.85"/>
<dbReference type="EMBL" id="Y00353">
    <property type="protein sequence ID" value="CAA68432.1"/>
    <property type="molecule type" value="Genomic_DNA"/>
</dbReference>
<dbReference type="EMBL" id="Z75208">
    <property type="protein sequence ID" value="CAA99532.1"/>
    <property type="molecule type" value="Genomic_DNA"/>
</dbReference>
<dbReference type="EMBL" id="AL009126">
    <property type="protein sequence ID" value="CAB14787.2"/>
    <property type="molecule type" value="Genomic_DNA"/>
</dbReference>
<dbReference type="PIR" id="A26522">
    <property type="entry name" value="A26522"/>
</dbReference>
<dbReference type="RefSeq" id="NP_390705.2">
    <property type="nucleotide sequence ID" value="NC_000964.3"/>
</dbReference>
<dbReference type="RefSeq" id="WP_004399139.1">
    <property type="nucleotide sequence ID" value="NZ_OZ025638.1"/>
</dbReference>
<dbReference type="SMR" id="P05645"/>
<dbReference type="FunCoup" id="P05645">
    <property type="interactions" value="527"/>
</dbReference>
<dbReference type="IntAct" id="P05645">
    <property type="interactions" value="1"/>
</dbReference>
<dbReference type="STRING" id="224308.BSU28270"/>
<dbReference type="PaxDb" id="224308-BSU28270"/>
<dbReference type="EnsemblBacteria" id="CAB14787">
    <property type="protein sequence ID" value="CAB14787"/>
    <property type="gene ID" value="BSU_28270"/>
</dbReference>
<dbReference type="GeneID" id="936221"/>
<dbReference type="KEGG" id="bsu:BSU28270"/>
<dbReference type="PATRIC" id="fig|224308.179.peg.3071"/>
<dbReference type="eggNOG" id="COG0473">
    <property type="taxonomic scope" value="Bacteria"/>
</dbReference>
<dbReference type="InParanoid" id="P05645"/>
<dbReference type="OrthoDB" id="9806254at2"/>
<dbReference type="PhylomeDB" id="P05645"/>
<dbReference type="BioCyc" id="BSUB:BSU28270-MONOMER"/>
<dbReference type="UniPathway" id="UPA00048">
    <property type="reaction ID" value="UER00072"/>
</dbReference>
<dbReference type="Proteomes" id="UP000001570">
    <property type="component" value="Chromosome"/>
</dbReference>
<dbReference type="GO" id="GO:0005829">
    <property type="term" value="C:cytosol"/>
    <property type="evidence" value="ECO:0000318"/>
    <property type="project" value="GO_Central"/>
</dbReference>
<dbReference type="GO" id="GO:0003862">
    <property type="term" value="F:3-isopropylmalate dehydrogenase activity"/>
    <property type="evidence" value="ECO:0000318"/>
    <property type="project" value="GO_Central"/>
</dbReference>
<dbReference type="GO" id="GO:0000287">
    <property type="term" value="F:magnesium ion binding"/>
    <property type="evidence" value="ECO:0007669"/>
    <property type="project" value="InterPro"/>
</dbReference>
<dbReference type="GO" id="GO:0051287">
    <property type="term" value="F:NAD binding"/>
    <property type="evidence" value="ECO:0007669"/>
    <property type="project" value="InterPro"/>
</dbReference>
<dbReference type="GO" id="GO:0009098">
    <property type="term" value="P:L-leucine biosynthetic process"/>
    <property type="evidence" value="ECO:0000318"/>
    <property type="project" value="GO_Central"/>
</dbReference>
<dbReference type="FunFam" id="3.40.718.10:FF:000028">
    <property type="entry name" value="3-isopropylmalate dehydrogenase"/>
    <property type="match status" value="1"/>
</dbReference>
<dbReference type="Gene3D" id="3.40.718.10">
    <property type="entry name" value="Isopropylmalate Dehydrogenase"/>
    <property type="match status" value="1"/>
</dbReference>
<dbReference type="HAMAP" id="MF_01033">
    <property type="entry name" value="LeuB_type1"/>
    <property type="match status" value="1"/>
</dbReference>
<dbReference type="InterPro" id="IPR019818">
    <property type="entry name" value="IsoCit/isopropylmalate_DH_CS"/>
</dbReference>
<dbReference type="InterPro" id="IPR024084">
    <property type="entry name" value="IsoPropMal-DH-like_dom"/>
</dbReference>
<dbReference type="InterPro" id="IPR004429">
    <property type="entry name" value="Isopropylmalate_DH"/>
</dbReference>
<dbReference type="NCBIfam" id="TIGR00169">
    <property type="entry name" value="leuB"/>
    <property type="match status" value="1"/>
</dbReference>
<dbReference type="PANTHER" id="PTHR42979">
    <property type="entry name" value="3-ISOPROPYLMALATE DEHYDROGENASE"/>
    <property type="match status" value="1"/>
</dbReference>
<dbReference type="PANTHER" id="PTHR42979:SF1">
    <property type="entry name" value="3-ISOPROPYLMALATE DEHYDROGENASE"/>
    <property type="match status" value="1"/>
</dbReference>
<dbReference type="Pfam" id="PF00180">
    <property type="entry name" value="Iso_dh"/>
    <property type="match status" value="1"/>
</dbReference>
<dbReference type="SMART" id="SM01329">
    <property type="entry name" value="Iso_dh"/>
    <property type="match status" value="1"/>
</dbReference>
<dbReference type="SUPFAM" id="SSF53659">
    <property type="entry name" value="Isocitrate/Isopropylmalate dehydrogenase-like"/>
    <property type="match status" value="1"/>
</dbReference>
<dbReference type="PROSITE" id="PS00470">
    <property type="entry name" value="IDH_IMDH"/>
    <property type="match status" value="1"/>
</dbReference>
<proteinExistence type="inferred from homology"/>